<evidence type="ECO:0000255" key="1">
    <source>
        <dbReference type="HAMAP-Rule" id="MF_00394"/>
    </source>
</evidence>
<sequence length="299" mass="32870">MKLGIIGAGKWGSALHFALSKKNDVYITSRHYHDLKNFVSLEEILRLEYLILVLPAQVIGPWLEKHPLRKDHKVLLASKGIDIKKKKFLNEILQQFIPQEHLAVLSGPSFAAEVQKGLPTAVVVSSSNEILAKTYAQMFPDFMKAYVDDDVVGAEIAGAYKNVIAIASGICDGLKLGNNARAALLARGLVEMERFASHFGARMRTFLGLSGAGDLFLTASSTLSRNYRVGLGLALGKDLQRILNDLGEVAEGVYTVEAIIEIAKEHSIYVPIAREVYEIIHGKNPKLSIIHLLERNGDD</sequence>
<protein>
    <recommendedName>
        <fullName evidence="1">Glycerol-3-phosphate dehydrogenase [NAD(P)+]</fullName>
        <ecNumber evidence="1">1.1.1.94</ecNumber>
    </recommendedName>
    <alternativeName>
        <fullName evidence="1">NAD(P)(+)-dependent glycerol-3-phosphate dehydrogenase</fullName>
    </alternativeName>
    <alternativeName>
        <fullName evidence="1">NAD(P)H-dependent dihydroxyacetone-phosphate reductase</fullName>
    </alternativeName>
</protein>
<feature type="chain" id="PRO_1000060787" description="Glycerol-3-phosphate dehydrogenase [NAD(P)+]">
    <location>
        <begin position="1"/>
        <end position="299"/>
    </location>
</feature>
<feature type="active site" description="Proton acceptor" evidence="1">
    <location>
        <position position="161"/>
    </location>
</feature>
<feature type="binding site" evidence="1">
    <location>
        <position position="11"/>
    </location>
    <ligand>
        <name>NADPH</name>
        <dbReference type="ChEBI" id="CHEBI:57783"/>
    </ligand>
</feature>
<feature type="binding site" evidence="1">
    <location>
        <position position="30"/>
    </location>
    <ligand>
        <name>NADPH</name>
        <dbReference type="ChEBI" id="CHEBI:57783"/>
    </ligand>
</feature>
<feature type="binding site" evidence="1">
    <location>
        <position position="31"/>
    </location>
    <ligand>
        <name>NADPH</name>
        <dbReference type="ChEBI" id="CHEBI:57783"/>
    </ligand>
</feature>
<feature type="binding site" evidence="1">
    <location>
        <position position="79"/>
    </location>
    <ligand>
        <name>NADPH</name>
        <dbReference type="ChEBI" id="CHEBI:57783"/>
    </ligand>
</feature>
<feature type="binding site" evidence="1">
    <location>
        <position position="79"/>
    </location>
    <ligand>
        <name>sn-glycerol 3-phosphate</name>
        <dbReference type="ChEBI" id="CHEBI:57597"/>
    </ligand>
</feature>
<feature type="binding site" evidence="1">
    <location>
        <position position="107"/>
    </location>
    <ligand>
        <name>sn-glycerol 3-phosphate</name>
        <dbReference type="ChEBI" id="CHEBI:57597"/>
    </ligand>
</feature>
<feature type="binding site" evidence="1">
    <location>
        <position position="109"/>
    </location>
    <ligand>
        <name>sn-glycerol 3-phosphate</name>
        <dbReference type="ChEBI" id="CHEBI:57597"/>
    </ligand>
</feature>
<feature type="binding site" evidence="1">
    <location>
        <position position="111"/>
    </location>
    <ligand>
        <name>NADPH</name>
        <dbReference type="ChEBI" id="CHEBI:57783"/>
    </ligand>
</feature>
<feature type="binding site" evidence="1">
    <location>
        <position position="161"/>
    </location>
    <ligand>
        <name>sn-glycerol 3-phosphate</name>
        <dbReference type="ChEBI" id="CHEBI:57597"/>
    </ligand>
</feature>
<feature type="binding site" evidence="1">
    <location>
        <position position="214"/>
    </location>
    <ligand>
        <name>sn-glycerol 3-phosphate</name>
        <dbReference type="ChEBI" id="CHEBI:57597"/>
    </ligand>
</feature>
<feature type="binding site" evidence="1">
    <location>
        <position position="224"/>
    </location>
    <ligand>
        <name>sn-glycerol 3-phosphate</name>
        <dbReference type="ChEBI" id="CHEBI:57597"/>
    </ligand>
</feature>
<feature type="binding site" evidence="1">
    <location>
        <position position="225"/>
    </location>
    <ligand>
        <name>NADPH</name>
        <dbReference type="ChEBI" id="CHEBI:57783"/>
    </ligand>
</feature>
<feature type="binding site" evidence="1">
    <location>
        <position position="225"/>
    </location>
    <ligand>
        <name>sn-glycerol 3-phosphate</name>
        <dbReference type="ChEBI" id="CHEBI:57597"/>
    </ligand>
</feature>
<feature type="binding site" evidence="1">
    <location>
        <position position="226"/>
    </location>
    <ligand>
        <name>sn-glycerol 3-phosphate</name>
        <dbReference type="ChEBI" id="CHEBI:57597"/>
    </ligand>
</feature>
<feature type="binding site" evidence="1">
    <location>
        <position position="249"/>
    </location>
    <ligand>
        <name>NADPH</name>
        <dbReference type="ChEBI" id="CHEBI:57783"/>
    </ligand>
</feature>
<feature type="binding site" evidence="1">
    <location>
        <position position="251"/>
    </location>
    <ligand>
        <name>NADPH</name>
        <dbReference type="ChEBI" id="CHEBI:57783"/>
    </ligand>
</feature>
<keyword id="KW-0963">Cytoplasm</keyword>
<keyword id="KW-0444">Lipid biosynthesis</keyword>
<keyword id="KW-0443">Lipid metabolism</keyword>
<keyword id="KW-0520">NAD</keyword>
<keyword id="KW-0521">NADP</keyword>
<keyword id="KW-0547">Nucleotide-binding</keyword>
<keyword id="KW-0560">Oxidoreductase</keyword>
<keyword id="KW-0594">Phospholipid biosynthesis</keyword>
<keyword id="KW-1208">Phospholipid metabolism</keyword>
<keyword id="KW-1185">Reference proteome</keyword>
<proteinExistence type="inferred from homology"/>
<dbReference type="EC" id="1.1.1.94" evidence="1"/>
<dbReference type="EMBL" id="AP009178">
    <property type="protein sequence ID" value="BAF69971.1"/>
    <property type="molecule type" value="Genomic_DNA"/>
</dbReference>
<dbReference type="RefSeq" id="WP_012082234.1">
    <property type="nucleotide sequence ID" value="NC_009662.1"/>
</dbReference>
<dbReference type="SMR" id="A6Q3B2"/>
<dbReference type="FunCoup" id="A6Q3B2">
    <property type="interactions" value="409"/>
</dbReference>
<dbReference type="STRING" id="387092.NIS_0859"/>
<dbReference type="KEGG" id="nis:NIS_0859"/>
<dbReference type="eggNOG" id="COG0240">
    <property type="taxonomic scope" value="Bacteria"/>
</dbReference>
<dbReference type="HOGENOM" id="CLU_033449_0_2_7"/>
<dbReference type="InParanoid" id="A6Q3B2"/>
<dbReference type="OrthoDB" id="9812273at2"/>
<dbReference type="UniPathway" id="UPA00940"/>
<dbReference type="Proteomes" id="UP000001118">
    <property type="component" value="Chromosome"/>
</dbReference>
<dbReference type="GO" id="GO:0005829">
    <property type="term" value="C:cytosol"/>
    <property type="evidence" value="ECO:0007669"/>
    <property type="project" value="TreeGrafter"/>
</dbReference>
<dbReference type="GO" id="GO:0047952">
    <property type="term" value="F:glycerol-3-phosphate dehydrogenase [NAD(P)+] activity"/>
    <property type="evidence" value="ECO:0007669"/>
    <property type="project" value="UniProtKB-UniRule"/>
</dbReference>
<dbReference type="GO" id="GO:0051287">
    <property type="term" value="F:NAD binding"/>
    <property type="evidence" value="ECO:0007669"/>
    <property type="project" value="InterPro"/>
</dbReference>
<dbReference type="GO" id="GO:0005975">
    <property type="term" value="P:carbohydrate metabolic process"/>
    <property type="evidence" value="ECO:0007669"/>
    <property type="project" value="InterPro"/>
</dbReference>
<dbReference type="GO" id="GO:0046167">
    <property type="term" value="P:glycerol-3-phosphate biosynthetic process"/>
    <property type="evidence" value="ECO:0007669"/>
    <property type="project" value="UniProtKB-UniRule"/>
</dbReference>
<dbReference type="GO" id="GO:0046168">
    <property type="term" value="P:glycerol-3-phosphate catabolic process"/>
    <property type="evidence" value="ECO:0007669"/>
    <property type="project" value="InterPro"/>
</dbReference>
<dbReference type="GO" id="GO:0006650">
    <property type="term" value="P:glycerophospholipid metabolic process"/>
    <property type="evidence" value="ECO:0007669"/>
    <property type="project" value="UniProtKB-UniRule"/>
</dbReference>
<dbReference type="GO" id="GO:0008654">
    <property type="term" value="P:phospholipid biosynthetic process"/>
    <property type="evidence" value="ECO:0007669"/>
    <property type="project" value="UniProtKB-KW"/>
</dbReference>
<dbReference type="FunFam" id="1.10.1040.10:FF:000025">
    <property type="entry name" value="Glycerol-3-phosphate dehydrogenase [NAD(P)+]"/>
    <property type="match status" value="1"/>
</dbReference>
<dbReference type="Gene3D" id="1.10.1040.10">
    <property type="entry name" value="N-(1-d-carboxylethyl)-l-norvaline Dehydrogenase, domain 2"/>
    <property type="match status" value="1"/>
</dbReference>
<dbReference type="Gene3D" id="3.40.50.720">
    <property type="entry name" value="NAD(P)-binding Rossmann-like Domain"/>
    <property type="match status" value="1"/>
</dbReference>
<dbReference type="HAMAP" id="MF_00394">
    <property type="entry name" value="NAD_Glyc3P_dehydrog"/>
    <property type="match status" value="1"/>
</dbReference>
<dbReference type="InterPro" id="IPR008927">
    <property type="entry name" value="6-PGluconate_DH-like_C_sf"/>
</dbReference>
<dbReference type="InterPro" id="IPR013328">
    <property type="entry name" value="6PGD_dom2"/>
</dbReference>
<dbReference type="InterPro" id="IPR006168">
    <property type="entry name" value="G3P_DH_NAD-dep"/>
</dbReference>
<dbReference type="InterPro" id="IPR006109">
    <property type="entry name" value="G3P_DH_NAD-dep_C"/>
</dbReference>
<dbReference type="InterPro" id="IPR011128">
    <property type="entry name" value="G3P_DH_NAD-dep_N"/>
</dbReference>
<dbReference type="InterPro" id="IPR036291">
    <property type="entry name" value="NAD(P)-bd_dom_sf"/>
</dbReference>
<dbReference type="NCBIfam" id="NF000940">
    <property type="entry name" value="PRK00094.1-2"/>
    <property type="match status" value="1"/>
</dbReference>
<dbReference type="NCBIfam" id="NF000942">
    <property type="entry name" value="PRK00094.1-4"/>
    <property type="match status" value="1"/>
</dbReference>
<dbReference type="NCBIfam" id="NF000943">
    <property type="entry name" value="PRK00094.2-1"/>
    <property type="match status" value="1"/>
</dbReference>
<dbReference type="PANTHER" id="PTHR11728">
    <property type="entry name" value="GLYCEROL-3-PHOSPHATE DEHYDROGENASE"/>
    <property type="match status" value="1"/>
</dbReference>
<dbReference type="PANTHER" id="PTHR11728:SF1">
    <property type="entry name" value="GLYCEROL-3-PHOSPHATE DEHYDROGENASE [NAD(+)] 2, CHLOROPLASTIC"/>
    <property type="match status" value="1"/>
</dbReference>
<dbReference type="Pfam" id="PF07479">
    <property type="entry name" value="NAD_Gly3P_dh_C"/>
    <property type="match status" value="1"/>
</dbReference>
<dbReference type="Pfam" id="PF01210">
    <property type="entry name" value="NAD_Gly3P_dh_N"/>
    <property type="match status" value="1"/>
</dbReference>
<dbReference type="PIRSF" id="PIRSF000114">
    <property type="entry name" value="Glycerol-3-P_dh"/>
    <property type="match status" value="1"/>
</dbReference>
<dbReference type="SUPFAM" id="SSF48179">
    <property type="entry name" value="6-phosphogluconate dehydrogenase C-terminal domain-like"/>
    <property type="match status" value="1"/>
</dbReference>
<dbReference type="SUPFAM" id="SSF51735">
    <property type="entry name" value="NAD(P)-binding Rossmann-fold domains"/>
    <property type="match status" value="1"/>
</dbReference>
<dbReference type="PROSITE" id="PS00957">
    <property type="entry name" value="NAD_G3PDH"/>
    <property type="match status" value="1"/>
</dbReference>
<reference key="1">
    <citation type="journal article" date="2007" name="Proc. Natl. Acad. Sci. U.S.A.">
        <title>Deep-sea vent epsilon-proteobacterial genomes provide insights into emergence of pathogens.</title>
        <authorList>
            <person name="Nakagawa S."/>
            <person name="Takaki Y."/>
            <person name="Shimamura S."/>
            <person name="Reysenbach A.-L."/>
            <person name="Takai K."/>
            <person name="Horikoshi K."/>
        </authorList>
    </citation>
    <scope>NUCLEOTIDE SEQUENCE [LARGE SCALE GENOMIC DNA]</scope>
    <source>
        <strain>SB155-2</strain>
    </source>
</reference>
<accession>A6Q3B2</accession>
<name>GPDA_NITSB</name>
<gene>
    <name evidence="1" type="primary">gpsA</name>
    <name type="ordered locus">NIS_0859</name>
</gene>
<organism>
    <name type="scientific">Nitratiruptor sp. (strain SB155-2)</name>
    <dbReference type="NCBI Taxonomy" id="387092"/>
    <lineage>
        <taxon>Bacteria</taxon>
        <taxon>Pseudomonadati</taxon>
        <taxon>Campylobacterota</taxon>
        <taxon>Epsilonproteobacteria</taxon>
        <taxon>Nautiliales</taxon>
        <taxon>Nitratiruptoraceae</taxon>
        <taxon>Nitratiruptor</taxon>
    </lineage>
</organism>
<comment type="function">
    <text evidence="1">Catalyzes the reduction of the glycolytic intermediate dihydroxyacetone phosphate (DHAP) to sn-glycerol 3-phosphate (G3P), the key precursor for phospholipid synthesis.</text>
</comment>
<comment type="catalytic activity">
    <reaction evidence="1">
        <text>sn-glycerol 3-phosphate + NAD(+) = dihydroxyacetone phosphate + NADH + H(+)</text>
        <dbReference type="Rhea" id="RHEA:11092"/>
        <dbReference type="ChEBI" id="CHEBI:15378"/>
        <dbReference type="ChEBI" id="CHEBI:57540"/>
        <dbReference type="ChEBI" id="CHEBI:57597"/>
        <dbReference type="ChEBI" id="CHEBI:57642"/>
        <dbReference type="ChEBI" id="CHEBI:57945"/>
        <dbReference type="EC" id="1.1.1.94"/>
    </reaction>
    <physiologicalReaction direction="right-to-left" evidence="1">
        <dbReference type="Rhea" id="RHEA:11094"/>
    </physiologicalReaction>
</comment>
<comment type="catalytic activity">
    <reaction evidence="1">
        <text>sn-glycerol 3-phosphate + NADP(+) = dihydroxyacetone phosphate + NADPH + H(+)</text>
        <dbReference type="Rhea" id="RHEA:11096"/>
        <dbReference type="ChEBI" id="CHEBI:15378"/>
        <dbReference type="ChEBI" id="CHEBI:57597"/>
        <dbReference type="ChEBI" id="CHEBI:57642"/>
        <dbReference type="ChEBI" id="CHEBI:57783"/>
        <dbReference type="ChEBI" id="CHEBI:58349"/>
        <dbReference type="EC" id="1.1.1.94"/>
    </reaction>
    <physiologicalReaction direction="right-to-left" evidence="1">
        <dbReference type="Rhea" id="RHEA:11098"/>
    </physiologicalReaction>
</comment>
<comment type="pathway">
    <text evidence="1">Membrane lipid metabolism; glycerophospholipid metabolism.</text>
</comment>
<comment type="subcellular location">
    <subcellularLocation>
        <location evidence="1">Cytoplasm</location>
    </subcellularLocation>
</comment>
<comment type="similarity">
    <text evidence="1">Belongs to the NAD-dependent glycerol-3-phosphate dehydrogenase family.</text>
</comment>